<comment type="function">
    <text evidence="1">Involved in the synthesis of the GDP-mannose and dolichol-phosphate-mannose required for a number of critical mannosyl transfer reactions.</text>
</comment>
<comment type="catalytic activity">
    <reaction>
        <text>D-mannose 6-phosphate = D-fructose 6-phosphate</text>
        <dbReference type="Rhea" id="RHEA:12356"/>
        <dbReference type="ChEBI" id="CHEBI:58735"/>
        <dbReference type="ChEBI" id="CHEBI:61527"/>
        <dbReference type="EC" id="5.3.1.8"/>
    </reaction>
</comment>
<comment type="cofactor">
    <cofactor evidence="1">
        <name>Zn(2+)</name>
        <dbReference type="ChEBI" id="CHEBI:29105"/>
    </cofactor>
    <text evidence="1">Binds 1 zinc ion per subunit.</text>
</comment>
<comment type="pathway">
    <text>Nucleotide-sugar biosynthesis; GDP-alpha-D-mannose biosynthesis; alpha-D-mannose 1-phosphate from D-fructose 6-phosphate: step 1/2.</text>
</comment>
<comment type="subcellular location">
    <subcellularLocation>
        <location evidence="1">Cytoplasm</location>
    </subcellularLocation>
</comment>
<comment type="similarity">
    <text evidence="2">Belongs to the mannose-6-phosphate isomerase type 1 family.</text>
</comment>
<evidence type="ECO:0000250" key="1"/>
<evidence type="ECO:0000305" key="2"/>
<name>MPI_ECHMU</name>
<protein>
    <recommendedName>
        <fullName>Probable mannose-6-phosphate isomerase</fullName>
        <ecNumber>5.3.1.8</ecNumber>
    </recommendedName>
    <alternativeName>
        <fullName>Phosphohexomutase</fullName>
    </alternativeName>
    <alternativeName>
        <fullName>Phosphomannose isomerase</fullName>
        <shortName>PMI</shortName>
    </alternativeName>
</protein>
<reference key="1">
    <citation type="journal article" date="2000" name="J. Biol. Chem.">
        <title>mRNA trans-splicing in the human parasitic cestode Echinococcus multilocularis.</title>
        <authorList>
            <person name="Brehm K."/>
            <person name="Jensen K."/>
            <person name="Frosch M."/>
        </authorList>
    </citation>
    <scope>NUCLEOTIDE SEQUENCE [MRNA]</scope>
    <source>
        <strain>H-95</strain>
    </source>
</reference>
<accession>Q9GP38</accession>
<organism>
    <name type="scientific">Echinococcus multilocularis</name>
    <name type="common">Fox tapeworm</name>
    <dbReference type="NCBI Taxonomy" id="6211"/>
    <lineage>
        <taxon>Eukaryota</taxon>
        <taxon>Metazoa</taxon>
        <taxon>Spiralia</taxon>
        <taxon>Lophotrochozoa</taxon>
        <taxon>Platyhelminthes</taxon>
        <taxon>Cestoda</taxon>
        <taxon>Eucestoda</taxon>
        <taxon>Cyclophyllidea</taxon>
        <taxon>Taeniidae</taxon>
        <taxon>Echinococcus</taxon>
    </lineage>
</organism>
<feature type="chain" id="PRO_0000194234" description="Probable mannose-6-phosphate isomerase">
    <location>
        <begin position="1"/>
        <end position="433"/>
    </location>
</feature>
<feature type="active site" evidence="1">
    <location>
        <position position="296"/>
    </location>
</feature>
<feature type="binding site" evidence="1">
    <location>
        <position position="103"/>
    </location>
    <ligand>
        <name>Zn(2+)</name>
        <dbReference type="ChEBI" id="CHEBI:29105"/>
    </ligand>
</feature>
<feature type="binding site" evidence="1">
    <location>
        <position position="105"/>
    </location>
    <ligand>
        <name>Zn(2+)</name>
        <dbReference type="ChEBI" id="CHEBI:29105"/>
    </ligand>
</feature>
<feature type="binding site" evidence="1">
    <location>
        <position position="130"/>
    </location>
    <ligand>
        <name>Zn(2+)</name>
        <dbReference type="ChEBI" id="CHEBI:29105"/>
    </ligand>
</feature>
<feature type="binding site" evidence="1">
    <location>
        <position position="277"/>
    </location>
    <ligand>
        <name>Zn(2+)</name>
        <dbReference type="ChEBI" id="CHEBI:29105"/>
    </ligand>
</feature>
<keyword id="KW-0963">Cytoplasm</keyword>
<keyword id="KW-0413">Isomerase</keyword>
<keyword id="KW-0479">Metal-binding</keyword>
<keyword id="KW-0862">Zinc</keyword>
<dbReference type="EC" id="5.3.1.8"/>
<dbReference type="EMBL" id="AJ292370">
    <property type="protein sequence ID" value="CAC18544.1"/>
    <property type="molecule type" value="mRNA"/>
</dbReference>
<dbReference type="SMR" id="Q9GP38"/>
<dbReference type="eggNOG" id="KOG2757">
    <property type="taxonomic scope" value="Eukaryota"/>
</dbReference>
<dbReference type="OMA" id="DIGLFCG"/>
<dbReference type="OrthoDB" id="6605218at2759"/>
<dbReference type="UniPathway" id="UPA00126">
    <property type="reaction ID" value="UER00423"/>
</dbReference>
<dbReference type="GO" id="GO:0005829">
    <property type="term" value="C:cytosol"/>
    <property type="evidence" value="ECO:0007669"/>
    <property type="project" value="TreeGrafter"/>
</dbReference>
<dbReference type="GO" id="GO:0004476">
    <property type="term" value="F:mannose-6-phosphate isomerase activity"/>
    <property type="evidence" value="ECO:0007669"/>
    <property type="project" value="UniProtKB-EC"/>
</dbReference>
<dbReference type="GO" id="GO:0008270">
    <property type="term" value="F:zinc ion binding"/>
    <property type="evidence" value="ECO:0007669"/>
    <property type="project" value="InterPro"/>
</dbReference>
<dbReference type="GO" id="GO:0005975">
    <property type="term" value="P:carbohydrate metabolic process"/>
    <property type="evidence" value="ECO:0007669"/>
    <property type="project" value="InterPro"/>
</dbReference>
<dbReference type="GO" id="GO:0009298">
    <property type="term" value="P:GDP-mannose biosynthetic process"/>
    <property type="evidence" value="ECO:0007669"/>
    <property type="project" value="UniProtKB-UniPathway"/>
</dbReference>
<dbReference type="CDD" id="cd07011">
    <property type="entry name" value="cupin_PMI_type_I_N"/>
    <property type="match status" value="1"/>
</dbReference>
<dbReference type="Gene3D" id="2.60.120.10">
    <property type="entry name" value="Jelly Rolls"/>
    <property type="match status" value="2"/>
</dbReference>
<dbReference type="Gene3D" id="1.10.441.10">
    <property type="entry name" value="Phosphomannose Isomerase, domain 2"/>
    <property type="match status" value="1"/>
</dbReference>
<dbReference type="InterPro" id="IPR001250">
    <property type="entry name" value="Man6P_Isoase-1"/>
</dbReference>
<dbReference type="InterPro" id="IPR016305">
    <property type="entry name" value="Mannose-6-P_Isomerase"/>
</dbReference>
<dbReference type="InterPro" id="IPR018050">
    <property type="entry name" value="Pmannose_isomerase-type1_CS"/>
</dbReference>
<dbReference type="InterPro" id="IPR046457">
    <property type="entry name" value="PMI_typeI_cat"/>
</dbReference>
<dbReference type="InterPro" id="IPR046458">
    <property type="entry name" value="PMI_typeI_hel"/>
</dbReference>
<dbReference type="InterPro" id="IPR014710">
    <property type="entry name" value="RmlC-like_jellyroll"/>
</dbReference>
<dbReference type="InterPro" id="IPR011051">
    <property type="entry name" value="RmlC_Cupin_sf"/>
</dbReference>
<dbReference type="NCBIfam" id="TIGR00218">
    <property type="entry name" value="manA"/>
    <property type="match status" value="1"/>
</dbReference>
<dbReference type="PANTHER" id="PTHR10309">
    <property type="entry name" value="MANNOSE-6-PHOSPHATE ISOMERASE"/>
    <property type="match status" value="1"/>
</dbReference>
<dbReference type="PANTHER" id="PTHR10309:SF0">
    <property type="entry name" value="MANNOSE-6-PHOSPHATE ISOMERASE"/>
    <property type="match status" value="1"/>
</dbReference>
<dbReference type="Pfam" id="PF20511">
    <property type="entry name" value="PMI_typeI_cat"/>
    <property type="match status" value="1"/>
</dbReference>
<dbReference type="Pfam" id="PF20512">
    <property type="entry name" value="PMI_typeI_hel"/>
    <property type="match status" value="1"/>
</dbReference>
<dbReference type="PIRSF" id="PIRSF001480">
    <property type="entry name" value="Mannose-6-phosphate_isomerase"/>
    <property type="match status" value="1"/>
</dbReference>
<dbReference type="PRINTS" id="PR00714">
    <property type="entry name" value="MAN6PISMRASE"/>
</dbReference>
<dbReference type="SUPFAM" id="SSF51182">
    <property type="entry name" value="RmlC-like cupins"/>
    <property type="match status" value="1"/>
</dbReference>
<dbReference type="PROSITE" id="PS00966">
    <property type="entry name" value="PMI_I_2"/>
    <property type="match status" value="1"/>
</dbReference>
<proteinExistence type="evidence at transcript level"/>
<sequence>MLRLKCASQRYDWGKVGVNSIVYKLQVASENPDISHVDLPYAELWMGTHPSGSSCLWDNPHVTLAAHIQENPASLGKPSLIYFGRRLPFLFKVLSVAKALSIQAHPDKKMAVRLHAEQPDLYKDGSHKPEMAIALTDFEALLGFRPLNQILAFIQAFPELAELTTLELPSPEEKRDVQPPSIKQLYSNLMRSSPEKVESTIKSLLNRFTTGSKSVCDPPLSILGVDLQEEDVQALVDLFLRLTQAFPGDVGCLSIFFLNYIRLKSGEAIFLKANTPHAYLSGDCVECMANSDNVVRAGLTPKFKDVERLLEMLDYTPLTDSLRLGATQPIPTPEGISMKSFIPPVSEFAVDVIQFDAESRGFSLPSVPTASILLFLHGQGTITCPSTGEACSQETKFGPGFVYFVPADMIVNLVSKEDRKGSLHAFRAYVNRK</sequence>
<gene>
    <name type="primary">PMIH</name>
</gene>